<organism>
    <name type="scientific">Chlamydia trachomatis serovar L2 (strain ATCC VR-902B / DSM 19102 / 434/Bu)</name>
    <dbReference type="NCBI Taxonomy" id="471472"/>
    <lineage>
        <taxon>Bacteria</taxon>
        <taxon>Pseudomonadati</taxon>
        <taxon>Chlamydiota</taxon>
        <taxon>Chlamydiia</taxon>
        <taxon>Chlamydiales</taxon>
        <taxon>Chlamydiaceae</taxon>
        <taxon>Chlamydia/Chlamydophila group</taxon>
        <taxon>Chlamydia</taxon>
    </lineage>
</organism>
<proteinExistence type="inferred from homology"/>
<keyword id="KW-0963">Cytoplasm</keyword>
<keyword id="KW-0378">Hydrolase</keyword>
<keyword id="KW-0479">Metal-binding</keyword>
<keyword id="KW-0547">Nucleotide-binding</keyword>
<dbReference type="EC" id="3.1.3.5" evidence="1"/>
<dbReference type="EMBL" id="AM884176">
    <property type="protein sequence ID" value="CAP03909.1"/>
    <property type="molecule type" value="Genomic_DNA"/>
</dbReference>
<dbReference type="RefSeq" id="WP_009873647.1">
    <property type="nucleotide sequence ID" value="NC_010287.1"/>
</dbReference>
<dbReference type="RefSeq" id="YP_001654546.1">
    <property type="nucleotide sequence ID" value="NC_010287.1"/>
</dbReference>
<dbReference type="SMR" id="B0B9W8"/>
<dbReference type="KEGG" id="ctb:CTL0470"/>
<dbReference type="PATRIC" id="fig|471472.4.peg.505"/>
<dbReference type="HOGENOM" id="CLU_045192_1_0_0"/>
<dbReference type="Proteomes" id="UP001154402">
    <property type="component" value="Chromosome"/>
</dbReference>
<dbReference type="GO" id="GO:0005737">
    <property type="term" value="C:cytoplasm"/>
    <property type="evidence" value="ECO:0007669"/>
    <property type="project" value="UniProtKB-SubCell"/>
</dbReference>
<dbReference type="GO" id="GO:0008254">
    <property type="term" value="F:3'-nucleotidase activity"/>
    <property type="evidence" value="ECO:0007669"/>
    <property type="project" value="TreeGrafter"/>
</dbReference>
<dbReference type="GO" id="GO:0008253">
    <property type="term" value="F:5'-nucleotidase activity"/>
    <property type="evidence" value="ECO:0007669"/>
    <property type="project" value="UniProtKB-UniRule"/>
</dbReference>
<dbReference type="GO" id="GO:0004309">
    <property type="term" value="F:exopolyphosphatase activity"/>
    <property type="evidence" value="ECO:0007669"/>
    <property type="project" value="TreeGrafter"/>
</dbReference>
<dbReference type="GO" id="GO:0046872">
    <property type="term" value="F:metal ion binding"/>
    <property type="evidence" value="ECO:0007669"/>
    <property type="project" value="UniProtKB-UniRule"/>
</dbReference>
<dbReference type="GO" id="GO:0000166">
    <property type="term" value="F:nucleotide binding"/>
    <property type="evidence" value="ECO:0007669"/>
    <property type="project" value="UniProtKB-KW"/>
</dbReference>
<dbReference type="FunFam" id="3.40.1210.10:FF:000004">
    <property type="entry name" value="5'-nucleotidase SurE"/>
    <property type="match status" value="1"/>
</dbReference>
<dbReference type="Gene3D" id="3.40.1210.10">
    <property type="entry name" value="Survival protein SurE-like phosphatase/nucleotidase"/>
    <property type="match status" value="1"/>
</dbReference>
<dbReference type="HAMAP" id="MF_00060">
    <property type="entry name" value="SurE"/>
    <property type="match status" value="1"/>
</dbReference>
<dbReference type="InterPro" id="IPR030048">
    <property type="entry name" value="SurE"/>
</dbReference>
<dbReference type="InterPro" id="IPR002828">
    <property type="entry name" value="SurE-like_Pase/nucleotidase"/>
</dbReference>
<dbReference type="InterPro" id="IPR036523">
    <property type="entry name" value="SurE-like_sf"/>
</dbReference>
<dbReference type="NCBIfam" id="NF001493">
    <property type="entry name" value="PRK00346.2-3"/>
    <property type="match status" value="1"/>
</dbReference>
<dbReference type="NCBIfam" id="TIGR00087">
    <property type="entry name" value="surE"/>
    <property type="match status" value="1"/>
</dbReference>
<dbReference type="PANTHER" id="PTHR30457">
    <property type="entry name" value="5'-NUCLEOTIDASE SURE"/>
    <property type="match status" value="1"/>
</dbReference>
<dbReference type="PANTHER" id="PTHR30457:SF12">
    <property type="entry name" value="5'_3'-NUCLEOTIDASE SURE"/>
    <property type="match status" value="1"/>
</dbReference>
<dbReference type="Pfam" id="PF01975">
    <property type="entry name" value="SurE"/>
    <property type="match status" value="1"/>
</dbReference>
<dbReference type="SUPFAM" id="SSF64167">
    <property type="entry name" value="SurE-like"/>
    <property type="match status" value="1"/>
</dbReference>
<name>SURE_CHLT2</name>
<accession>B0B9W8</accession>
<protein>
    <recommendedName>
        <fullName evidence="1">5'-nucleotidase SurE</fullName>
        <ecNumber evidence="1">3.1.3.5</ecNumber>
    </recommendedName>
    <alternativeName>
        <fullName evidence="1">Nucleoside 5'-monophosphate phosphohydrolase</fullName>
    </alternativeName>
</protein>
<feature type="chain" id="PRO_1000091989" description="5'-nucleotidase SurE">
    <location>
        <begin position="1"/>
        <end position="283"/>
    </location>
</feature>
<feature type="binding site" evidence="1">
    <location>
        <position position="14"/>
    </location>
    <ligand>
        <name>a divalent metal cation</name>
        <dbReference type="ChEBI" id="CHEBI:60240"/>
    </ligand>
</feature>
<feature type="binding site" evidence="1">
    <location>
        <position position="15"/>
    </location>
    <ligand>
        <name>a divalent metal cation</name>
        <dbReference type="ChEBI" id="CHEBI:60240"/>
    </ligand>
</feature>
<feature type="binding site" evidence="1">
    <location>
        <position position="47"/>
    </location>
    <ligand>
        <name>a divalent metal cation</name>
        <dbReference type="ChEBI" id="CHEBI:60240"/>
    </ligand>
</feature>
<feature type="binding site" evidence="1">
    <location>
        <position position="105"/>
    </location>
    <ligand>
        <name>a divalent metal cation</name>
        <dbReference type="ChEBI" id="CHEBI:60240"/>
    </ligand>
</feature>
<comment type="function">
    <text evidence="1">Nucleotidase that shows phosphatase activity on nucleoside 5'-monophosphates.</text>
</comment>
<comment type="catalytic activity">
    <reaction evidence="1">
        <text>a ribonucleoside 5'-phosphate + H2O = a ribonucleoside + phosphate</text>
        <dbReference type="Rhea" id="RHEA:12484"/>
        <dbReference type="ChEBI" id="CHEBI:15377"/>
        <dbReference type="ChEBI" id="CHEBI:18254"/>
        <dbReference type="ChEBI" id="CHEBI:43474"/>
        <dbReference type="ChEBI" id="CHEBI:58043"/>
        <dbReference type="EC" id="3.1.3.5"/>
    </reaction>
</comment>
<comment type="cofactor">
    <cofactor evidence="1">
        <name>a divalent metal cation</name>
        <dbReference type="ChEBI" id="CHEBI:60240"/>
    </cofactor>
    <text evidence="1">Binds 1 divalent metal cation per subunit.</text>
</comment>
<comment type="subcellular location">
    <subcellularLocation>
        <location evidence="1">Cytoplasm</location>
    </subcellularLocation>
</comment>
<comment type="similarity">
    <text evidence="1">Belongs to the SurE nucleotidase family.</text>
</comment>
<sequence length="283" mass="31516">MTETRRLRILITNDDGIKAKGISLLISLLREADFADLYVVAPLEEQSGRSMAFSLVEPTALEPFDYPQRVQEAWAVTGTPVDCVKLAIGELFKENALDLILSGINNGKNSGRCLYYSATVGAIREANLHGIPAIALSQSENIAFFQEAHMASLIRSLCEFTVAYKHTDPLGLNVNFPASADDSPWKGIRFTLSGNEFLFGIPRLVRTEGNRRYYTLYDMRDKVSEEFSEEYLALANNYISAAPLVSKNTPRATLSEEELAFLKDSFEQSVLWKASLNLEEDLA</sequence>
<reference key="1">
    <citation type="journal article" date="2008" name="Genome Res.">
        <title>Chlamydia trachomatis: genome sequence analysis of lymphogranuloma venereum isolates.</title>
        <authorList>
            <person name="Thomson N.R."/>
            <person name="Holden M.T.G."/>
            <person name="Carder C."/>
            <person name="Lennard N."/>
            <person name="Lockey S.J."/>
            <person name="Marsh P."/>
            <person name="Skipp P."/>
            <person name="O'Connor C.D."/>
            <person name="Goodhead I."/>
            <person name="Norbertzcak H."/>
            <person name="Harris B."/>
            <person name="Ormond D."/>
            <person name="Rance R."/>
            <person name="Quail M.A."/>
            <person name="Parkhill J."/>
            <person name="Stephens R.S."/>
            <person name="Clarke I.N."/>
        </authorList>
    </citation>
    <scope>NUCLEOTIDE SEQUENCE [LARGE SCALE GENOMIC DNA]</scope>
    <source>
        <strain>ATCC VR-902B / DSM 19102 / 434/Bu</strain>
    </source>
</reference>
<evidence type="ECO:0000255" key="1">
    <source>
        <dbReference type="HAMAP-Rule" id="MF_00060"/>
    </source>
</evidence>
<gene>
    <name evidence="1" type="primary">surE</name>
    <name type="ordered locus">CTL0470</name>
</gene>